<sequence>MKISYHGHSVVKIETNGKVIVIDPFLTGNPKTDLKAEDVKVDAILLSHGHGDHVGDTVEIAKRNDAIVVAPFELATFLGWQGVKTHPMHIGGAHEFDFGKVKFTQAFHGSSYIDEENKTITYTGMPAGILFTAEEKTIYHAGDTALFSDMKLIGDRNDIELAFLPIGDNFTMGPEDAALAVKWIDAKTVVPMHYNTFPVIEQDPHRFVEKLTNCTGRVLEVGESITL</sequence>
<accession>A7GTQ5</accession>
<proteinExistence type="inferred from homology"/>
<gene>
    <name type="ordered locus">Bcer98_3294</name>
</gene>
<reference key="1">
    <citation type="journal article" date="2008" name="Chem. Biol. Interact.">
        <title>Extending the Bacillus cereus group genomics to putative food-borne pathogens of different toxicity.</title>
        <authorList>
            <person name="Lapidus A."/>
            <person name="Goltsman E."/>
            <person name="Auger S."/>
            <person name="Galleron N."/>
            <person name="Segurens B."/>
            <person name="Dossat C."/>
            <person name="Land M.L."/>
            <person name="Broussolle V."/>
            <person name="Brillard J."/>
            <person name="Guinebretiere M.-H."/>
            <person name="Sanchis V."/>
            <person name="Nguen-the C."/>
            <person name="Lereclus D."/>
            <person name="Richardson P."/>
            <person name="Wincker P."/>
            <person name="Weissenbach J."/>
            <person name="Ehrlich S.D."/>
            <person name="Sorokin A."/>
        </authorList>
    </citation>
    <scope>NUCLEOTIDE SEQUENCE [LARGE SCALE GENOMIC DNA]</scope>
    <source>
        <strain>DSM 22905 / CIP 110041 / 391-98 / NVH 391-98</strain>
    </source>
</reference>
<name>Y3294_BACCN</name>
<dbReference type="EMBL" id="CP000764">
    <property type="protein sequence ID" value="ABS23513.1"/>
    <property type="molecule type" value="Genomic_DNA"/>
</dbReference>
<dbReference type="RefSeq" id="WP_012095754.1">
    <property type="nucleotide sequence ID" value="NC_009674.1"/>
</dbReference>
<dbReference type="SMR" id="A7GTQ5"/>
<dbReference type="STRING" id="315749.Bcer98_3294"/>
<dbReference type="GeneID" id="33898539"/>
<dbReference type="KEGG" id="bcy:Bcer98_3294"/>
<dbReference type="eggNOG" id="COG2220">
    <property type="taxonomic scope" value="Bacteria"/>
</dbReference>
<dbReference type="HOGENOM" id="CLU_070010_4_1_9"/>
<dbReference type="OrthoDB" id="9789133at2"/>
<dbReference type="Proteomes" id="UP000002300">
    <property type="component" value="Chromosome"/>
</dbReference>
<dbReference type="GO" id="GO:0016787">
    <property type="term" value="F:hydrolase activity"/>
    <property type="evidence" value="ECO:0007669"/>
    <property type="project" value="UniProtKB-UniRule"/>
</dbReference>
<dbReference type="Gene3D" id="3.60.15.10">
    <property type="entry name" value="Ribonuclease Z/Hydroxyacylglutathione hydrolase-like"/>
    <property type="match status" value="1"/>
</dbReference>
<dbReference type="HAMAP" id="MF_00457">
    <property type="entry name" value="UPF0173"/>
    <property type="match status" value="1"/>
</dbReference>
<dbReference type="InterPro" id="IPR001279">
    <property type="entry name" value="Metallo-B-lactamas"/>
</dbReference>
<dbReference type="InterPro" id="IPR036866">
    <property type="entry name" value="RibonucZ/Hydroxyglut_hydro"/>
</dbReference>
<dbReference type="InterPro" id="IPR022877">
    <property type="entry name" value="UPF0173"/>
</dbReference>
<dbReference type="InterPro" id="IPR050114">
    <property type="entry name" value="UPF0173_UPF0282_UlaG_hydrolase"/>
</dbReference>
<dbReference type="NCBIfam" id="NF001911">
    <property type="entry name" value="PRK00685.1"/>
    <property type="match status" value="1"/>
</dbReference>
<dbReference type="PANTHER" id="PTHR43546:SF3">
    <property type="entry name" value="UPF0173 METAL-DEPENDENT HYDROLASE MJ1163"/>
    <property type="match status" value="1"/>
</dbReference>
<dbReference type="PANTHER" id="PTHR43546">
    <property type="entry name" value="UPF0173 METAL-DEPENDENT HYDROLASE MJ1163-RELATED"/>
    <property type="match status" value="1"/>
</dbReference>
<dbReference type="Pfam" id="PF12706">
    <property type="entry name" value="Lactamase_B_2"/>
    <property type="match status" value="1"/>
</dbReference>
<dbReference type="SMART" id="SM00849">
    <property type="entry name" value="Lactamase_B"/>
    <property type="match status" value="1"/>
</dbReference>
<dbReference type="SUPFAM" id="SSF56281">
    <property type="entry name" value="Metallo-hydrolase/oxidoreductase"/>
    <property type="match status" value="1"/>
</dbReference>
<evidence type="ECO:0000255" key="1">
    <source>
        <dbReference type="HAMAP-Rule" id="MF_00457"/>
    </source>
</evidence>
<feature type="chain" id="PRO_1000081122" description="UPF0173 metal-dependent hydrolase Bcer98_3294">
    <location>
        <begin position="1"/>
        <end position="227"/>
    </location>
</feature>
<protein>
    <recommendedName>
        <fullName evidence="1">UPF0173 metal-dependent hydrolase Bcer98_3294</fullName>
    </recommendedName>
</protein>
<keyword id="KW-0378">Hydrolase</keyword>
<organism>
    <name type="scientific">Bacillus cytotoxicus (strain DSM 22905 / CIP 110041 / 391-98 / NVH 391-98)</name>
    <dbReference type="NCBI Taxonomy" id="315749"/>
    <lineage>
        <taxon>Bacteria</taxon>
        <taxon>Bacillati</taxon>
        <taxon>Bacillota</taxon>
        <taxon>Bacilli</taxon>
        <taxon>Bacillales</taxon>
        <taxon>Bacillaceae</taxon>
        <taxon>Bacillus</taxon>
        <taxon>Bacillus cereus group</taxon>
    </lineage>
</organism>
<comment type="similarity">
    <text evidence="1">Belongs to the UPF0173 family.</text>
</comment>